<keyword id="KW-0997">Cell inner membrane</keyword>
<keyword id="KW-1003">Cell membrane</keyword>
<keyword id="KW-0472">Membrane</keyword>
<keyword id="KW-0511">Multifunctional enzyme</keyword>
<keyword id="KW-0520">NAD</keyword>
<keyword id="KW-0874">Quinone</keyword>
<keyword id="KW-1278">Translocase</keyword>
<keyword id="KW-0813">Transport</keyword>
<keyword id="KW-0830">Ubiquinone</keyword>
<accession>B0KMY0</accession>
<proteinExistence type="inferred from homology"/>
<protein>
    <recommendedName>
        <fullName evidence="1">NADH-quinone oxidoreductase subunit C/D</fullName>
        <ecNumber evidence="1">7.1.1.-</ecNumber>
    </recommendedName>
    <alternativeName>
        <fullName evidence="1">NADH dehydrogenase I subunit C/D</fullName>
    </alternativeName>
    <alternativeName>
        <fullName evidence="1">NDH-1 subunit C/D</fullName>
    </alternativeName>
</protein>
<gene>
    <name evidence="1" type="primary">nuoC</name>
    <name evidence="1" type="synonym">nuoCD</name>
    <name evidence="1" type="synonym">nuoD</name>
    <name type="ordered locus">PputGB1_3693</name>
</gene>
<dbReference type="EC" id="7.1.1.-" evidence="1"/>
<dbReference type="EMBL" id="CP000926">
    <property type="protein sequence ID" value="ABY99584.1"/>
    <property type="molecule type" value="Genomic_DNA"/>
</dbReference>
<dbReference type="RefSeq" id="WP_012273293.1">
    <property type="nucleotide sequence ID" value="NC_010322.1"/>
</dbReference>
<dbReference type="SMR" id="B0KMY0"/>
<dbReference type="GeneID" id="83671001"/>
<dbReference type="KEGG" id="ppg:PputGB1_3693"/>
<dbReference type="eggNOG" id="COG0649">
    <property type="taxonomic scope" value="Bacteria"/>
</dbReference>
<dbReference type="eggNOG" id="COG0852">
    <property type="taxonomic scope" value="Bacteria"/>
</dbReference>
<dbReference type="HOGENOM" id="CLU_015134_3_2_6"/>
<dbReference type="Proteomes" id="UP000002157">
    <property type="component" value="Chromosome"/>
</dbReference>
<dbReference type="GO" id="GO:0030964">
    <property type="term" value="C:NADH dehydrogenase complex"/>
    <property type="evidence" value="ECO:0007669"/>
    <property type="project" value="InterPro"/>
</dbReference>
<dbReference type="GO" id="GO:0005886">
    <property type="term" value="C:plasma membrane"/>
    <property type="evidence" value="ECO:0007669"/>
    <property type="project" value="UniProtKB-SubCell"/>
</dbReference>
<dbReference type="GO" id="GO:0051287">
    <property type="term" value="F:NAD binding"/>
    <property type="evidence" value="ECO:0007669"/>
    <property type="project" value="InterPro"/>
</dbReference>
<dbReference type="GO" id="GO:0008137">
    <property type="term" value="F:NADH dehydrogenase (ubiquinone) activity"/>
    <property type="evidence" value="ECO:0007669"/>
    <property type="project" value="InterPro"/>
</dbReference>
<dbReference type="GO" id="GO:0050136">
    <property type="term" value="F:NADH:ubiquinone reductase (non-electrogenic) activity"/>
    <property type="evidence" value="ECO:0007669"/>
    <property type="project" value="UniProtKB-UniRule"/>
</dbReference>
<dbReference type="GO" id="GO:0048038">
    <property type="term" value="F:quinone binding"/>
    <property type="evidence" value="ECO:0007669"/>
    <property type="project" value="UniProtKB-KW"/>
</dbReference>
<dbReference type="FunFam" id="1.10.645.10:FF:000001">
    <property type="entry name" value="NADH-quinone oxidoreductase subunit C/D"/>
    <property type="match status" value="1"/>
</dbReference>
<dbReference type="FunFam" id="3.30.460.80:FF:000001">
    <property type="entry name" value="NADH-quinone oxidoreductase subunit C/D"/>
    <property type="match status" value="1"/>
</dbReference>
<dbReference type="Gene3D" id="1.10.645.10">
    <property type="entry name" value="Cytochrome-c3 Hydrogenase, chain B"/>
    <property type="match status" value="1"/>
</dbReference>
<dbReference type="Gene3D" id="3.30.460.80">
    <property type="entry name" value="NADH:ubiquinone oxidoreductase, 30kDa subunit"/>
    <property type="match status" value="1"/>
</dbReference>
<dbReference type="HAMAP" id="MF_01357">
    <property type="entry name" value="NDH1_NuoC"/>
    <property type="match status" value="1"/>
</dbReference>
<dbReference type="HAMAP" id="MF_01359">
    <property type="entry name" value="NDH1_NuoCD_1"/>
    <property type="match status" value="1"/>
</dbReference>
<dbReference type="HAMAP" id="MF_01358">
    <property type="entry name" value="NDH1_NuoD"/>
    <property type="match status" value="1"/>
</dbReference>
<dbReference type="InterPro" id="IPR010218">
    <property type="entry name" value="NADH_DH_suC"/>
</dbReference>
<dbReference type="InterPro" id="IPR023062">
    <property type="entry name" value="NADH_DH_suCD"/>
</dbReference>
<dbReference type="InterPro" id="IPR001135">
    <property type="entry name" value="NADH_Q_OxRdtase_suD"/>
</dbReference>
<dbReference type="InterPro" id="IPR037232">
    <property type="entry name" value="NADH_quin_OxRdtase_su_C/D-like"/>
</dbReference>
<dbReference type="InterPro" id="IPR001268">
    <property type="entry name" value="NADH_UbQ_OxRdtase_30kDa_su"/>
</dbReference>
<dbReference type="InterPro" id="IPR014029">
    <property type="entry name" value="NADH_UbQ_OxRdtase_49kDa_CS"/>
</dbReference>
<dbReference type="InterPro" id="IPR022885">
    <property type="entry name" value="NDH1_su_D/H"/>
</dbReference>
<dbReference type="InterPro" id="IPR029014">
    <property type="entry name" value="NiFe-Hase_large"/>
</dbReference>
<dbReference type="NCBIfam" id="TIGR01961">
    <property type="entry name" value="NuoC_fam"/>
    <property type="match status" value="1"/>
</dbReference>
<dbReference type="NCBIfam" id="TIGR01962">
    <property type="entry name" value="NuoD"/>
    <property type="match status" value="1"/>
</dbReference>
<dbReference type="NCBIfam" id="NF004739">
    <property type="entry name" value="PRK06075.1"/>
    <property type="match status" value="1"/>
</dbReference>
<dbReference type="NCBIfam" id="NF008728">
    <property type="entry name" value="PRK11742.1"/>
    <property type="match status" value="1"/>
</dbReference>
<dbReference type="PANTHER" id="PTHR11993:SF45">
    <property type="entry name" value="NADH-QUINONE OXIDOREDUCTASE SUBUNIT C_D"/>
    <property type="match status" value="1"/>
</dbReference>
<dbReference type="PANTHER" id="PTHR11993">
    <property type="entry name" value="NADH-UBIQUINONE OXIDOREDUCTASE 49 KDA SUBUNIT"/>
    <property type="match status" value="1"/>
</dbReference>
<dbReference type="Pfam" id="PF00329">
    <property type="entry name" value="Complex1_30kDa"/>
    <property type="match status" value="1"/>
</dbReference>
<dbReference type="Pfam" id="PF00346">
    <property type="entry name" value="Complex1_49kDa"/>
    <property type="match status" value="1"/>
</dbReference>
<dbReference type="SUPFAM" id="SSF56762">
    <property type="entry name" value="HydB/Nqo4-like"/>
    <property type="match status" value="1"/>
</dbReference>
<dbReference type="SUPFAM" id="SSF143243">
    <property type="entry name" value="Nqo5-like"/>
    <property type="match status" value="1"/>
</dbReference>
<dbReference type="PROSITE" id="PS00535">
    <property type="entry name" value="COMPLEX1_49K"/>
    <property type="match status" value="1"/>
</dbReference>
<reference key="1">
    <citation type="submission" date="2008-01" db="EMBL/GenBank/DDBJ databases">
        <title>Complete sequence of Pseudomonas putida GB-1.</title>
        <authorList>
            <consortium name="US DOE Joint Genome Institute"/>
            <person name="Copeland A."/>
            <person name="Lucas S."/>
            <person name="Lapidus A."/>
            <person name="Barry K."/>
            <person name="Glavina del Rio T."/>
            <person name="Dalin E."/>
            <person name="Tice H."/>
            <person name="Pitluck S."/>
            <person name="Bruce D."/>
            <person name="Goodwin L."/>
            <person name="Chertkov O."/>
            <person name="Brettin T."/>
            <person name="Detter J.C."/>
            <person name="Han C."/>
            <person name="Kuske C.R."/>
            <person name="Schmutz J."/>
            <person name="Larimer F."/>
            <person name="Land M."/>
            <person name="Hauser L."/>
            <person name="Kyrpides N."/>
            <person name="Kim E."/>
            <person name="McCarthy J.K."/>
            <person name="Richardson P."/>
        </authorList>
    </citation>
    <scope>NUCLEOTIDE SEQUENCE [LARGE SCALE GENOMIC DNA]</scope>
    <source>
        <strain>GB-1</strain>
    </source>
</reference>
<name>NUOCD_PSEPG</name>
<feature type="chain" id="PRO_0000358662" description="NADH-quinone oxidoreductase subunit C/D">
    <location>
        <begin position="1"/>
        <end position="593"/>
    </location>
</feature>
<feature type="region of interest" description="NADH dehydrogenase I subunit C" evidence="1">
    <location>
        <begin position="1"/>
        <end position="184"/>
    </location>
</feature>
<feature type="region of interest" description="NADH dehydrogenase I subunit D" evidence="1">
    <location>
        <begin position="208"/>
        <end position="593"/>
    </location>
</feature>
<organism>
    <name type="scientific">Pseudomonas putida (strain GB-1)</name>
    <dbReference type="NCBI Taxonomy" id="76869"/>
    <lineage>
        <taxon>Bacteria</taxon>
        <taxon>Pseudomonadati</taxon>
        <taxon>Pseudomonadota</taxon>
        <taxon>Gammaproteobacteria</taxon>
        <taxon>Pseudomonadales</taxon>
        <taxon>Pseudomonadaceae</taxon>
        <taxon>Pseudomonas</taxon>
    </lineage>
</organism>
<evidence type="ECO:0000255" key="1">
    <source>
        <dbReference type="HAMAP-Rule" id="MF_01359"/>
    </source>
</evidence>
<comment type="function">
    <text evidence="1">NDH-1 shuttles electrons from NADH, via FMN and iron-sulfur (Fe-S) centers, to quinones in the respiratory chain. The immediate electron acceptor for the enzyme in this species is believed to be ubiquinone. Couples the redox reaction to proton translocation (for every two electrons transferred, four hydrogen ions are translocated across the cytoplasmic membrane), and thus conserves the redox energy in a proton gradient.</text>
</comment>
<comment type="catalytic activity">
    <reaction evidence="1">
        <text>a quinone + NADH + 5 H(+)(in) = a quinol + NAD(+) + 4 H(+)(out)</text>
        <dbReference type="Rhea" id="RHEA:57888"/>
        <dbReference type="ChEBI" id="CHEBI:15378"/>
        <dbReference type="ChEBI" id="CHEBI:24646"/>
        <dbReference type="ChEBI" id="CHEBI:57540"/>
        <dbReference type="ChEBI" id="CHEBI:57945"/>
        <dbReference type="ChEBI" id="CHEBI:132124"/>
    </reaction>
</comment>
<comment type="subunit">
    <text evidence="1">NDH-1 is composed of 13 different subunits. Subunits NuoB, CD, E, F, and G constitute the peripheral sector of the complex.</text>
</comment>
<comment type="subcellular location">
    <subcellularLocation>
        <location evidence="1">Cell inner membrane</location>
        <topology evidence="1">Peripheral membrane protein</topology>
        <orientation evidence="1">Cytoplasmic side</orientation>
    </subcellularLocation>
</comment>
<comment type="similarity">
    <text evidence="1">In the N-terminal section; belongs to the complex I 30 kDa subunit family.</text>
</comment>
<comment type="similarity">
    <text evidence="1">In the C-terminal section; belongs to the complex I 49 kDa subunit family.</text>
</comment>
<sequence length="593" mass="67626">MTADNAIFIPPYKADDQDVVVELNNRFGAEAFVAQETRTGMPVLWVKRAQLKEVLSFLRGVAKPYSMLYDLHGVDERLRTQRRGLPAADFSVFYHLLSVERNSDVMIKVSLSEGDLNLPTVTGIWPNANWYEREVWDMFGIDFAGHPHLSRIMMPPTWEGHPLRKDYPARATEFDPYSLTLAKQQLEEESARFNPEAWGMKRQGANEDYMFLNLGPNHPSAHGAFRIVLQLDGEEIVDCVPDIGYHHRGAEKMAERQSWHSFIPYTDRIDYLGGVMNNLPYVLAVEKLAGIKVPQKVDVIRIMLAEFFRITSHLLFLGTYIQDVGAMTPVFFTFTDRQRAYTVIEAITGFRLHPAWYRIGGVAHDLPRGWDKLVKDFVEWLPKRLDEYTKAALQNSILKGRTIGVAAYNTKEALEWGTTGAGLRSTGCDFDLRKARPYSGYENFEFEVPLAHNGDAYDRCMVRVEEMRQSIRIIDQCLRNMPEGPYKADHPLTTPPPKERTLQHIETLITHFLQVSWGPVMPANESFQMIEATKGINSYYLTSDGGTMSYRTRIRTPSYPHLQQIPSVIKGSMVADLIAYLGSIDFVMADVDR</sequence>